<organism>
    <name type="scientific">Haemophilus influenzae</name>
    <dbReference type="NCBI Taxonomy" id="727"/>
    <lineage>
        <taxon>Bacteria</taxon>
        <taxon>Pseudomonadati</taxon>
        <taxon>Pseudomonadota</taxon>
        <taxon>Gammaproteobacteria</taxon>
        <taxon>Pasteurellales</taxon>
        <taxon>Pasteurellaceae</taxon>
        <taxon>Haemophilus</taxon>
    </lineage>
</organism>
<proteinExistence type="evidence at protein level"/>
<protein>
    <recommendedName>
        <fullName evidence="3">Outer membrane protein P5</fullName>
        <shortName>OMP P5</shortName>
    </recommendedName>
    <alternativeName>
        <fullName evidence="3">Fimbrin</fullName>
    </alternativeName>
    <alternativeName>
        <fullName evidence="1">Outer membrane porin A</fullName>
    </alternativeName>
    <alternativeName>
        <fullName>Outer membrane protein A</fullName>
    </alternativeName>
</protein>
<comment type="function">
    <text evidence="2">Acts as a fimbriae subunit, allowing adhesion to host cells.</text>
</comment>
<comment type="function">
    <text evidence="1">With TolR probably plays a role in maintaining the position of the peptidoglycan cell wall in the periplasm. Acts as a porin with low permeability that allows slow penetration of small solutes; an internal gate slows down solute passage.</text>
</comment>
<comment type="subunit">
    <text evidence="1">Monomer and homodimer.</text>
</comment>
<comment type="subcellular location">
    <subcellularLocation>
        <location evidence="1 2">Cell outer membrane</location>
        <topology evidence="1">Multi-pass membrane protein</topology>
    </subcellularLocation>
    <subcellularLocation>
        <location evidence="2">Fimbrium</location>
    </subcellularLocation>
    <text evidence="2">Antisera against this protein label the whole length of fimbriae.</text>
</comment>
<comment type="domain">
    <text evidence="1">The extracellular loops are most variable in sequence, and in some bacteria confer sensitivity to phage and/or colicins.</text>
</comment>
<comment type="disruption phenotype">
    <text evidence="2">No fimbrae seen on bacteria, the outer membrane blebs significantly, bacterial adhesion to human oropharyngeal cells decreases about 65%, significantly reduced ear infections in chinchilla.</text>
</comment>
<comment type="biotechnology">
    <text evidence="2">Immunization of chinchillas with this protein provides partial protection against subsequent infection, suggesting it might be a useful vaccine candidate.</text>
</comment>
<comment type="miscellaneous">
    <text evidence="2">Non-typeable Haemophilus influenzae (NTHi) is a primary pathogen in otitis media (inflammation of the middle ear).</text>
</comment>
<comment type="similarity">
    <text evidence="1">Belongs to the outer membrane OOP (TC 1.B.6) superfamily. OmpA family.</text>
</comment>
<feature type="signal peptide" evidence="1 2">
    <location>
        <begin position="1"/>
        <end position="21"/>
    </location>
</feature>
<feature type="chain" id="PRO_0000020109" description="Outer membrane protein P5" evidence="1">
    <location>
        <begin position="22"/>
        <end position="359"/>
    </location>
</feature>
<feature type="transmembrane region" description="Beta stranded" evidence="1">
    <location>
        <begin position="27"/>
        <end position="37"/>
    </location>
</feature>
<feature type="transmembrane region" description="Beta stranded" evidence="1">
    <location>
        <begin position="64"/>
        <end position="75"/>
    </location>
</feature>
<feature type="transmembrane region" description="Beta stranded" evidence="1">
    <location>
        <begin position="83"/>
        <end position="91"/>
    </location>
</feature>
<feature type="transmembrane region" description="Beta stranded" evidence="1">
    <location>
        <begin position="110"/>
        <end position="121"/>
    </location>
</feature>
<feature type="transmembrane region" description="Beta stranded" evidence="1">
    <location>
        <begin position="126"/>
        <end position="134"/>
    </location>
</feature>
<feature type="transmembrane region" description="Beta stranded" evidence="1">
    <location>
        <begin position="164"/>
        <end position="173"/>
    </location>
</feature>
<feature type="transmembrane region" description="Beta stranded" evidence="1">
    <location>
        <begin position="178"/>
        <end position="185"/>
    </location>
</feature>
<feature type="transmembrane region" description="Beta stranded" evidence="1">
    <location>
        <begin position="211"/>
        <end position="219"/>
    </location>
</feature>
<feature type="domain" description="OmpA-like" evidence="1">
    <location>
        <begin position="233"/>
        <end position="359"/>
    </location>
</feature>
<feature type="site" description="Part of salt bridge gating mechanism" evidence="1">
    <location>
        <position position="86"/>
    </location>
</feature>
<feature type="site" description="Part of salt bridge gating mechanism" evidence="1">
    <location>
        <position position="181"/>
    </location>
</feature>
<feature type="disulfide bond" evidence="1">
    <location>
        <begin position="332"/>
        <end position="344"/>
    </location>
</feature>
<accession>P45996</accession>
<name>OMP53_HAEIF</name>
<sequence length="359" mass="38340">MKKTAIALVVAGLAAASVAQAAPQENTFYAGVKAGQGSFHDGINNNGAIKKGLSSSNYGYRRNTFTYGVFGGYQILNQDNFGLAAELGYDDFGRAKLREAGKPKAKHTNHGAYLSLKGSYEVLDGLDVYGKAGVALVRSDYKFYEDANGTRDHKKGRHTARASGLFAVGAEYAVLPELAVRLEYQWLTRVGKYRPQDKPNTAINYNPWIGCINAGISYRFGQGEAPVVAAPEMVSKTFSLNSDVTFAFGKANLKPQAQATLDSVYGEISQVKSRKVAVAGYTNRIGSDAFNVKLSQERADSVANYFVAKGVAADAISATGYGEANPVTGATCDQVKGRKALIACLAPDRRVEIAVNGTK</sequence>
<evidence type="ECO:0000255" key="1">
    <source>
        <dbReference type="HAMAP-Rule" id="MF_00842"/>
    </source>
</evidence>
<evidence type="ECO:0000269" key="2">
    <source>
    </source>
</evidence>
<evidence type="ECO:0000303" key="3">
    <source>
    </source>
</evidence>
<gene>
    <name evidence="1" type="primary">ompA</name>
    <name type="synonym">ompP5</name>
</gene>
<reference key="1">
    <citation type="journal article" date="1994" name="Infect. Immun.">
        <title>Role of fimbriae expressed by nontypeable Haemophilus influenzae in pathogenesis of and protection against otitis media and relatedness of the fimbrin subunit to outer membrane protein A.</title>
        <authorList>
            <person name="Sirakova T."/>
            <person name="Kolattukudy P.E."/>
            <person name="Murwin D."/>
            <person name="Billy J."/>
            <person name="Leake E."/>
            <person name="Lim D."/>
            <person name="Demaria T."/>
            <person name="Bakaletz L."/>
        </authorList>
    </citation>
    <scope>NUCLEOTIDE SEQUENCE [GENOMIC DNA]</scope>
    <scope>PROTEIN SEQUENCE OF 22-41 AND 234-248</scope>
    <scope>SUBCELLULAR LOCATION</scope>
    <scope>DISRUPTION PHENOTYPE</scope>
    <scope>BIOTECHNOLOGY</scope>
    <source>
        <strain>NTHi 1128</strain>
    </source>
</reference>
<keyword id="KW-0130">Cell adhesion</keyword>
<keyword id="KW-0998">Cell outer membrane</keyword>
<keyword id="KW-0903">Direct protein sequencing</keyword>
<keyword id="KW-1015">Disulfide bond</keyword>
<keyword id="KW-0281">Fimbrium</keyword>
<keyword id="KW-0406">Ion transport</keyword>
<keyword id="KW-0472">Membrane</keyword>
<keyword id="KW-0626">Porin</keyword>
<keyword id="KW-0732">Signal</keyword>
<keyword id="KW-0812">Transmembrane</keyword>
<keyword id="KW-1134">Transmembrane beta strand</keyword>
<keyword id="KW-0813">Transport</keyword>
<keyword id="KW-0843">Virulence</keyword>
<dbReference type="EMBL" id="L08448">
    <property type="protein sequence ID" value="AAA24959.1"/>
    <property type="molecule type" value="Genomic_DNA"/>
</dbReference>
<dbReference type="SMR" id="P45996"/>
<dbReference type="GO" id="GO:0009279">
    <property type="term" value="C:cell outer membrane"/>
    <property type="evidence" value="ECO:0007669"/>
    <property type="project" value="UniProtKB-SubCell"/>
</dbReference>
<dbReference type="GO" id="GO:0009289">
    <property type="term" value="C:pilus"/>
    <property type="evidence" value="ECO:0007669"/>
    <property type="project" value="UniProtKB-SubCell"/>
</dbReference>
<dbReference type="GO" id="GO:0046930">
    <property type="term" value="C:pore complex"/>
    <property type="evidence" value="ECO:0007669"/>
    <property type="project" value="UniProtKB-KW"/>
</dbReference>
<dbReference type="GO" id="GO:0015288">
    <property type="term" value="F:porin activity"/>
    <property type="evidence" value="ECO:0007669"/>
    <property type="project" value="UniProtKB-UniRule"/>
</dbReference>
<dbReference type="GO" id="GO:0007155">
    <property type="term" value="P:cell adhesion"/>
    <property type="evidence" value="ECO:0007669"/>
    <property type="project" value="UniProtKB-KW"/>
</dbReference>
<dbReference type="GO" id="GO:0034220">
    <property type="term" value="P:monoatomic ion transmembrane transport"/>
    <property type="evidence" value="ECO:0007669"/>
    <property type="project" value="UniProtKB-UniRule"/>
</dbReference>
<dbReference type="CDD" id="cd07185">
    <property type="entry name" value="OmpA_C-like"/>
    <property type="match status" value="1"/>
</dbReference>
<dbReference type="FunFam" id="3.30.1330.60:FF:000004">
    <property type="entry name" value="Outer membrane protein A"/>
    <property type="match status" value="1"/>
</dbReference>
<dbReference type="Gene3D" id="2.40.160.20">
    <property type="match status" value="1"/>
</dbReference>
<dbReference type="Gene3D" id="3.30.1330.60">
    <property type="entry name" value="OmpA-like domain"/>
    <property type="match status" value="1"/>
</dbReference>
<dbReference type="HAMAP" id="MF_00842">
    <property type="entry name" value="OmpA"/>
    <property type="match status" value="1"/>
</dbReference>
<dbReference type="InterPro" id="IPR050330">
    <property type="entry name" value="Bact_OuterMem_StrucFunc"/>
</dbReference>
<dbReference type="InterPro" id="IPR011250">
    <property type="entry name" value="OMP/PagP_b-brl"/>
</dbReference>
<dbReference type="InterPro" id="IPR006664">
    <property type="entry name" value="OMP_bac"/>
</dbReference>
<dbReference type="InterPro" id="IPR002368">
    <property type="entry name" value="OmpA"/>
</dbReference>
<dbReference type="InterPro" id="IPR006665">
    <property type="entry name" value="OmpA-like"/>
</dbReference>
<dbReference type="InterPro" id="IPR006690">
    <property type="entry name" value="OMPA-like_CS"/>
</dbReference>
<dbReference type="InterPro" id="IPR036737">
    <property type="entry name" value="OmpA-like_sf"/>
</dbReference>
<dbReference type="InterPro" id="IPR000498">
    <property type="entry name" value="OmpA-like_TM_dom"/>
</dbReference>
<dbReference type="NCBIfam" id="NF008071">
    <property type="entry name" value="PRK10808.1"/>
    <property type="match status" value="1"/>
</dbReference>
<dbReference type="PANTHER" id="PTHR30329:SF21">
    <property type="entry name" value="LIPOPROTEIN YIAD-RELATED"/>
    <property type="match status" value="1"/>
</dbReference>
<dbReference type="PANTHER" id="PTHR30329">
    <property type="entry name" value="STATOR ELEMENT OF FLAGELLAR MOTOR COMPLEX"/>
    <property type="match status" value="1"/>
</dbReference>
<dbReference type="Pfam" id="PF00691">
    <property type="entry name" value="OmpA"/>
    <property type="match status" value="1"/>
</dbReference>
<dbReference type="Pfam" id="PF01389">
    <property type="entry name" value="OmpA_membrane"/>
    <property type="match status" value="1"/>
</dbReference>
<dbReference type="PRINTS" id="PR01021">
    <property type="entry name" value="OMPADOMAIN"/>
</dbReference>
<dbReference type="PRINTS" id="PR01022">
    <property type="entry name" value="OUTRMMBRANEA"/>
</dbReference>
<dbReference type="SUPFAM" id="SSF56925">
    <property type="entry name" value="OMPA-like"/>
    <property type="match status" value="1"/>
</dbReference>
<dbReference type="SUPFAM" id="SSF103088">
    <property type="entry name" value="OmpA-like"/>
    <property type="match status" value="1"/>
</dbReference>
<dbReference type="PROSITE" id="PS01068">
    <property type="entry name" value="OMPA_1"/>
    <property type="match status" value="1"/>
</dbReference>
<dbReference type="PROSITE" id="PS51123">
    <property type="entry name" value="OMPA_2"/>
    <property type="match status" value="1"/>
</dbReference>